<comment type="similarity">
    <text evidence="1">Belongs to the UPF0441 family.</text>
</comment>
<name>YGIB_SALTI</name>
<accession>Q8XGZ1</accession>
<accession>Q7AM93</accession>
<sequence length="223" mass="23387">MKRTKSIHHASFRKSWSARHLTPVALAVTAVFMLAGCEKSDETVSLYQNADDCSAANPGKSAECTTAYNNALKEAERTAPKYATREDCVAEFGEGQCQQAPAQAGMAPENQAQAQQSSGSFWMPLMAGYMMGRLMGGGAGFAQQPLFSSKNPASPAYGKYTDAAGKNYGAAQPGRTMTVPKTAMAPKPATTTTVTRGGFGESVAKQSTMQRSAAGTSTRSMGG</sequence>
<evidence type="ECO:0000255" key="1">
    <source>
        <dbReference type="HAMAP-Rule" id="MF_01188"/>
    </source>
</evidence>
<evidence type="ECO:0000256" key="2">
    <source>
        <dbReference type="SAM" id="MobiDB-lite"/>
    </source>
</evidence>
<organism>
    <name type="scientific">Salmonella typhi</name>
    <dbReference type="NCBI Taxonomy" id="90370"/>
    <lineage>
        <taxon>Bacteria</taxon>
        <taxon>Pseudomonadati</taxon>
        <taxon>Pseudomonadota</taxon>
        <taxon>Gammaproteobacteria</taxon>
        <taxon>Enterobacterales</taxon>
        <taxon>Enterobacteriaceae</taxon>
        <taxon>Salmonella</taxon>
    </lineage>
</organism>
<gene>
    <name evidence="1" type="primary">ygiB</name>
    <name type="ordered locus">STY3365</name>
    <name type="ordered locus">t3108</name>
</gene>
<reference key="1">
    <citation type="journal article" date="2003" name="J. Bacteriol.">
        <title>Comparative genomics of Salmonella enterica serovar Typhi strains Ty2 and CT18.</title>
        <authorList>
            <person name="Deng W."/>
            <person name="Liou S.-R."/>
            <person name="Plunkett G. III"/>
            <person name="Mayhew G.F."/>
            <person name="Rose D.J."/>
            <person name="Burland V."/>
            <person name="Kodoyianni V."/>
            <person name="Schwartz D.C."/>
            <person name="Blattner F.R."/>
        </authorList>
    </citation>
    <scope>NUCLEOTIDE SEQUENCE [LARGE SCALE GENOMIC DNA]</scope>
    <source>
        <strain>ATCC 700931 / Ty2</strain>
    </source>
</reference>
<reference key="2">
    <citation type="journal article" date="2001" name="Nature">
        <title>Complete genome sequence of a multiple drug resistant Salmonella enterica serovar Typhi CT18.</title>
        <authorList>
            <person name="Parkhill J."/>
            <person name="Dougan G."/>
            <person name="James K.D."/>
            <person name="Thomson N.R."/>
            <person name="Pickard D."/>
            <person name="Wain J."/>
            <person name="Churcher C.M."/>
            <person name="Mungall K.L."/>
            <person name="Bentley S.D."/>
            <person name="Holden M.T.G."/>
            <person name="Sebaihia M."/>
            <person name="Baker S."/>
            <person name="Basham D."/>
            <person name="Brooks K."/>
            <person name="Chillingworth T."/>
            <person name="Connerton P."/>
            <person name="Cronin A."/>
            <person name="Davis P."/>
            <person name="Davies R.M."/>
            <person name="Dowd L."/>
            <person name="White N."/>
            <person name="Farrar J."/>
            <person name="Feltwell T."/>
            <person name="Hamlin N."/>
            <person name="Haque A."/>
            <person name="Hien T.T."/>
            <person name="Holroyd S."/>
            <person name="Jagels K."/>
            <person name="Krogh A."/>
            <person name="Larsen T.S."/>
            <person name="Leather S."/>
            <person name="Moule S."/>
            <person name="O'Gaora P."/>
            <person name="Parry C."/>
            <person name="Quail M.A."/>
            <person name="Rutherford K.M."/>
            <person name="Simmonds M."/>
            <person name="Skelton J."/>
            <person name="Stevens K."/>
            <person name="Whitehead S."/>
            <person name="Barrell B.G."/>
        </authorList>
    </citation>
    <scope>NUCLEOTIDE SEQUENCE [LARGE SCALE GENOMIC DNA]</scope>
    <source>
        <strain>CT18</strain>
    </source>
</reference>
<protein>
    <recommendedName>
        <fullName evidence="1">UPF0441 protein YgiB</fullName>
    </recommendedName>
</protein>
<feature type="chain" id="PRO_0000293641" description="UPF0441 protein YgiB">
    <location>
        <begin position="1"/>
        <end position="223"/>
    </location>
</feature>
<feature type="region of interest" description="Disordered" evidence="2">
    <location>
        <begin position="178"/>
        <end position="223"/>
    </location>
</feature>
<feature type="compositionally biased region" description="Low complexity" evidence="2">
    <location>
        <begin position="178"/>
        <end position="195"/>
    </location>
</feature>
<feature type="compositionally biased region" description="Polar residues" evidence="2">
    <location>
        <begin position="204"/>
        <end position="223"/>
    </location>
</feature>
<dbReference type="EMBL" id="AE014613">
    <property type="protein sequence ID" value="AAO70651.1"/>
    <property type="molecule type" value="Genomic_DNA"/>
</dbReference>
<dbReference type="EMBL" id="AL513382">
    <property type="protein sequence ID" value="CAD07713.1"/>
    <property type="molecule type" value="Genomic_DNA"/>
</dbReference>
<dbReference type="RefSeq" id="NP_457579.1">
    <property type="nucleotide sequence ID" value="NC_003198.1"/>
</dbReference>
<dbReference type="RefSeq" id="WP_000831528.1">
    <property type="nucleotide sequence ID" value="NZ_WSUR01000003.1"/>
</dbReference>
<dbReference type="STRING" id="220341.gene:17587222"/>
<dbReference type="KEGG" id="stt:t3108"/>
<dbReference type="KEGG" id="sty:STY3365"/>
<dbReference type="PATRIC" id="fig|220341.7.peg.3426"/>
<dbReference type="eggNOG" id="COG5463">
    <property type="taxonomic scope" value="Bacteria"/>
</dbReference>
<dbReference type="HOGENOM" id="CLU_095624_0_0_6"/>
<dbReference type="OMA" id="NRYYSQP"/>
<dbReference type="OrthoDB" id="5903948at2"/>
<dbReference type="Proteomes" id="UP000000541">
    <property type="component" value="Chromosome"/>
</dbReference>
<dbReference type="Proteomes" id="UP000002670">
    <property type="component" value="Chromosome"/>
</dbReference>
<dbReference type="HAMAP" id="MF_01188">
    <property type="entry name" value="UPF0441"/>
    <property type="match status" value="1"/>
</dbReference>
<dbReference type="InterPro" id="IPR009576">
    <property type="entry name" value="Biofilm_formation_YgiB"/>
</dbReference>
<dbReference type="NCBIfam" id="NF008655">
    <property type="entry name" value="PRK11653.1"/>
    <property type="match status" value="1"/>
</dbReference>
<dbReference type="Pfam" id="PF06693">
    <property type="entry name" value="DUF1190"/>
    <property type="match status" value="1"/>
</dbReference>
<proteinExistence type="inferred from homology"/>